<organism>
    <name type="scientific">Caenorhabditis elegans</name>
    <dbReference type="NCBI Taxonomy" id="6239"/>
    <lineage>
        <taxon>Eukaryota</taxon>
        <taxon>Metazoa</taxon>
        <taxon>Ecdysozoa</taxon>
        <taxon>Nematoda</taxon>
        <taxon>Chromadorea</taxon>
        <taxon>Rhabditida</taxon>
        <taxon>Rhabditina</taxon>
        <taxon>Rhabditomorpha</taxon>
        <taxon>Rhabditoidea</taxon>
        <taxon>Rhabditidae</taxon>
        <taxon>Peloderinae</taxon>
        <taxon>Caenorhabditis</taxon>
    </lineage>
</organism>
<reference key="1">
    <citation type="journal article" date="1998" name="Science">
        <title>Genome sequence of the nematode C. elegans: a platform for investigating biology.</title>
        <authorList>
            <consortium name="The C. elegans sequencing consortium"/>
        </authorList>
    </citation>
    <scope>NUCLEOTIDE SEQUENCE [LARGE SCALE GENOMIC DNA]</scope>
    <source>
        <strain>Bristol N2</strain>
    </source>
</reference>
<keyword id="KW-1185">Reference proteome</keyword>
<comment type="interaction">
    <interactant intactId="EBI-2002318">
        <id>Q6BEV5</id>
    </interactant>
    <interactant intactId="EBI-2915667">
        <id>G5ECZ8</id>
        <label>mpz-1</label>
    </interactant>
    <organismsDiffer>false</organismsDiffer>
    <experiments>2</experiments>
</comment>
<comment type="interaction">
    <interactant intactId="EBI-2002318">
        <id>Q6BEV5</id>
    </interactant>
    <interactant intactId="EBI-2918010">
        <id>G5EDB9</id>
        <label>pxf-1</label>
    </interactant>
    <organismsDiffer>false</organismsDiffer>
    <experiments>2</experiments>
</comment>
<sequence length="417" mass="47088">MDSEKENPASPTTGREEEIPGSSPEGVYPADEDHIFHEDQAPLRVESAKHEEEIVEQQQQQPEDLEQGDMIVEDGDQQFMNMVQITQEDMYEAGFDVEAGFELNHLTEEQLNIVVAISQQRQAKQNEQEHNEEVVIEDGSHHHMVHHEMIENQFEGDGNGPEEEYDGNGQIIDNAMHIILTNDGGVNITSKQKQFYVSPSEIANLNIDLNNLSTENVHQLVQLALPPIKEKAQDSAYNDQAPSTSYHHHHHEQLEAGKSTRSPIIGETVQIRTADGRLQDAVVKYVRGDSEYKIQLMNGEFAYATIDQMLVPQRDRSDHEYQQVAPPVLLRRTDMASVRNAAQKRSANDDLCPPVLKKSYQLAPVVDGPHLVHTPNFCCPICDKKVYQKEPSYIVIRLPACDSCTREKIIVLDEQSS</sequence>
<name>YRMC_CAEEL</name>
<gene>
    <name type="ORF">R06F6.12</name>
</gene>
<proteinExistence type="evidence at protein level"/>
<feature type="chain" id="PRO_0000065419" description="Uncharacterized protein R06F6.12">
    <location>
        <begin position="1"/>
        <end position="417"/>
    </location>
</feature>
<feature type="region of interest" description="Disordered" evidence="1">
    <location>
        <begin position="1"/>
        <end position="41"/>
    </location>
</feature>
<feature type="region of interest" description="Disordered" evidence="1">
    <location>
        <begin position="233"/>
        <end position="262"/>
    </location>
</feature>
<feature type="compositionally biased region" description="Basic and acidic residues" evidence="1">
    <location>
        <begin position="31"/>
        <end position="41"/>
    </location>
</feature>
<feature type="compositionally biased region" description="Polar residues" evidence="1">
    <location>
        <begin position="235"/>
        <end position="245"/>
    </location>
</feature>
<protein>
    <recommendedName>
        <fullName>Uncharacterized protein R06F6.12</fullName>
    </recommendedName>
</protein>
<dbReference type="EMBL" id="Z46794">
    <property type="protein sequence ID" value="CAH04745.1"/>
    <property type="molecule type" value="Genomic_DNA"/>
</dbReference>
<dbReference type="RefSeq" id="NP_001022277.1">
    <property type="nucleotide sequence ID" value="NM_001027106.6"/>
</dbReference>
<dbReference type="SMR" id="Q6BEV5"/>
<dbReference type="BioGRID" id="531956">
    <property type="interactions" value="18"/>
</dbReference>
<dbReference type="FunCoup" id="Q6BEV5">
    <property type="interactions" value="400"/>
</dbReference>
<dbReference type="IntAct" id="Q6BEV5">
    <property type="interactions" value="13"/>
</dbReference>
<dbReference type="STRING" id="6239.R06F6.12.1"/>
<dbReference type="iPTMnet" id="Q6BEV5"/>
<dbReference type="PaxDb" id="6239-R06F6.12"/>
<dbReference type="EnsemblMetazoa" id="R06F6.12.1">
    <property type="protein sequence ID" value="R06F6.12.1"/>
    <property type="gene ID" value="WBGene00023418"/>
</dbReference>
<dbReference type="GeneID" id="174666"/>
<dbReference type="KEGG" id="cel:CELE_R06F6.12"/>
<dbReference type="UCSC" id="R06F6.12">
    <property type="organism name" value="c. elegans"/>
</dbReference>
<dbReference type="AGR" id="WB:WBGene00023418"/>
<dbReference type="CTD" id="174666"/>
<dbReference type="WormBase" id="R06F6.12">
    <property type="protein sequence ID" value="CE36945"/>
    <property type="gene ID" value="WBGene00023418"/>
</dbReference>
<dbReference type="eggNOG" id="KOG2006">
    <property type="taxonomic scope" value="Eukaryota"/>
</dbReference>
<dbReference type="HOGENOM" id="CLU_659266_0_0_1"/>
<dbReference type="InParanoid" id="Q6BEV5"/>
<dbReference type="OMA" id="PQYIVIR"/>
<dbReference type="OrthoDB" id="5845898at2759"/>
<dbReference type="PRO" id="PR:Q6BEV5"/>
<dbReference type="Proteomes" id="UP000001940">
    <property type="component" value="Chromosome II"/>
</dbReference>
<dbReference type="Bgee" id="WBGene00023418">
    <property type="expression patterns" value="Expressed in germ line (C elegans) and 4 other cell types or tissues"/>
</dbReference>
<evidence type="ECO:0000256" key="1">
    <source>
        <dbReference type="SAM" id="MobiDB-lite"/>
    </source>
</evidence>
<accession>Q6BEV5</accession>